<comment type="function">
    <text evidence="6 12 13">Component of the ubiquinol-cytochrome c oxidoreductase, a multisubunit transmembrane complex that is part of the mitochondrial electron transport chain which drives oxidative phosphorylation. The respiratory chain contains 3 multisubunit complexes succinate dehydrogenase (complex II, CII), ubiquinol-cytochrome c oxidoreductase (cytochrome b-c1 complex, complex III, CIII) and cytochrome c oxidase (complex IV, CIV), that cooperate to transfer electrons derived from NADH and succinate to molecular oxygen, creating an electrochemical gradient over the inner membrane that drives transmembrane transport and the ATP synthase. The cytochrome b-c1 complex catalyzes electron transfer from ubiquinol to cytochrome c, linking this redox reaction to translocation of protons across the mitochondrial inner membrane, with protons being carried across the membrane as hydrogens on the quinol. In the process called Q cycle, 2 protons are consumed from the matrix, 4 protons are released into the intermembrane space and 2 electrons are passed to cytochrome c.</text>
</comment>
<comment type="subunit">
    <text evidence="2 3 4 5 7 8">Component of the ubiquinol-cytochrome c oxidoreductase (cytochrome b-c1 complex, complex III, CIII), a multisubunit enzyme composed of 10 subunits. The complex is composed of 3 respiratory subunits cytochrome b (cob), cytochrome c1 (cyt-1) and Rieske protein (fes-1), 2 core protein subunits pep and ucr-1, and 5 low-molecular weight protein subunits qcr6, qcr7, qcr8, qcr9 and probably NCU16844/qcr10 (PubMed:18251112, PubMed:226365, PubMed:6273583, PubMed:6302289). The complex exists as an obligatory dimer and forms supercomplexes (SCs) in the inner mitochondrial membrane with NADH-ubiquinone oxidoreductase (complex I, CI) and cytochrome c oxidase (complex IV, CIV), resulting in different assemblies (supercomplexes SCI(1)III(2), SCIII(2)IV(1) and SCIII(2)IV(2) as well as higher order I(x)III(y)IV(z) megacomplexes) (PubMed:17873079, PubMed:19239619).</text>
</comment>
<comment type="subcellular location">
    <subcellularLocation>
        <location evidence="5">Mitochondrion inner membrane</location>
        <topology evidence="1">Single-pass membrane protein</topology>
    </subcellularLocation>
</comment>
<comment type="similarity">
    <text evidence="11">Belongs to the UQCRQ/QCR8 family.</text>
</comment>
<proteinExistence type="evidence at protein level"/>
<gene>
    <name type="primary">qcr8</name>
    <name type="ORF">20H10.240</name>
    <name type="ORF">NCU08947</name>
</gene>
<accession>P48503</accession>
<accession>Q7S7F4</accession>
<feature type="propeptide" id="PRO_0000035994" description="Plays a role in role in intramitochondrial sorting" evidence="9">
    <location>
        <begin position="1"/>
        <end position="8"/>
    </location>
</feature>
<feature type="chain" id="PRO_0000035995" description="Cytochrome b-c1 complex subunit 8">
    <location>
        <begin position="9"/>
        <end position="107"/>
    </location>
</feature>
<feature type="topological domain" description="Mitochondrial matrix" evidence="1">
    <location>
        <begin position="1"/>
        <end position="62"/>
    </location>
</feature>
<feature type="transmembrane region" description="Helical" evidence="1">
    <location>
        <begin position="63"/>
        <end position="93"/>
    </location>
</feature>
<feature type="topological domain" description="Mitochondrial intermembrane" evidence="1">
    <location>
        <begin position="94"/>
        <end position="107"/>
    </location>
</feature>
<name>QCR8_NEUCR</name>
<reference key="1">
    <citation type="journal article" date="1996" name="Biochem. J.">
        <title>Subunit VII of ubiquinol:cytochrome-c oxidoreductase from Neurospora crassa is functional in yeast and has an N-terminal extension that is not essential for mitochondrial targeting.</title>
        <authorList>
            <person name="Lobo-Hajdu G."/>
            <person name="Braun H.P."/>
            <person name="Romp N."/>
            <person name="Grivell L.A."/>
            <person name="Berden J.A."/>
            <person name="Schmitz U.K."/>
        </authorList>
    </citation>
    <scope>NUCLEOTIDE SEQUENCE [MRNA]</scope>
    <scope>PROTEIN SEQUENCE OF 9-26</scope>
    <source>
        <strain>ATCC 24698 / 74-OR23-1A / CBS 708.71 / DSM 1257 / FGSC 987</strain>
    </source>
</reference>
<reference key="2">
    <citation type="journal article" date="2003" name="Nucleic Acids Res.">
        <title>What's in the genome of a filamentous fungus? Analysis of the Neurospora genome sequence.</title>
        <authorList>
            <person name="Mannhaupt G."/>
            <person name="Montrone C."/>
            <person name="Haase D."/>
            <person name="Mewes H.-W."/>
            <person name="Aign V."/>
            <person name="Hoheisel J.D."/>
            <person name="Fartmann B."/>
            <person name="Nyakatura G."/>
            <person name="Kempken F."/>
            <person name="Maier J."/>
            <person name="Schulte U."/>
        </authorList>
    </citation>
    <scope>NUCLEOTIDE SEQUENCE [LARGE SCALE GENOMIC DNA]</scope>
    <source>
        <strain>ATCC 24698 / 74-OR23-1A / CBS 708.71 / DSM 1257 / FGSC 987</strain>
    </source>
</reference>
<reference key="3">
    <citation type="journal article" date="2003" name="Nature">
        <title>The genome sequence of the filamentous fungus Neurospora crassa.</title>
        <authorList>
            <person name="Galagan J.E."/>
            <person name="Calvo S.E."/>
            <person name="Borkovich K.A."/>
            <person name="Selker E.U."/>
            <person name="Read N.D."/>
            <person name="Jaffe D.B."/>
            <person name="FitzHugh W."/>
            <person name="Ma L.-J."/>
            <person name="Smirnov S."/>
            <person name="Purcell S."/>
            <person name="Rehman B."/>
            <person name="Elkins T."/>
            <person name="Engels R."/>
            <person name="Wang S."/>
            <person name="Nielsen C.B."/>
            <person name="Butler J."/>
            <person name="Endrizzi M."/>
            <person name="Qui D."/>
            <person name="Ianakiev P."/>
            <person name="Bell-Pedersen D."/>
            <person name="Nelson M.A."/>
            <person name="Werner-Washburne M."/>
            <person name="Selitrennikoff C.P."/>
            <person name="Kinsey J.A."/>
            <person name="Braun E.L."/>
            <person name="Zelter A."/>
            <person name="Schulte U."/>
            <person name="Kothe G.O."/>
            <person name="Jedd G."/>
            <person name="Mewes H.-W."/>
            <person name="Staben C."/>
            <person name="Marcotte E."/>
            <person name="Greenberg D."/>
            <person name="Roy A."/>
            <person name="Foley K."/>
            <person name="Naylor J."/>
            <person name="Stange-Thomann N."/>
            <person name="Barrett R."/>
            <person name="Gnerre S."/>
            <person name="Kamal M."/>
            <person name="Kamvysselis M."/>
            <person name="Mauceli E.W."/>
            <person name="Bielke C."/>
            <person name="Rudd S."/>
            <person name="Frishman D."/>
            <person name="Krystofova S."/>
            <person name="Rasmussen C."/>
            <person name="Metzenberg R.L."/>
            <person name="Perkins D.D."/>
            <person name="Kroken S."/>
            <person name="Cogoni C."/>
            <person name="Macino G."/>
            <person name="Catcheside D.E.A."/>
            <person name="Li W."/>
            <person name="Pratt R.J."/>
            <person name="Osmani S.A."/>
            <person name="DeSouza C.P.C."/>
            <person name="Glass N.L."/>
            <person name="Orbach M.J."/>
            <person name="Berglund J.A."/>
            <person name="Voelker R."/>
            <person name="Yarden O."/>
            <person name="Plamann M."/>
            <person name="Seiler S."/>
            <person name="Dunlap J.C."/>
            <person name="Radford A."/>
            <person name="Aramayo R."/>
            <person name="Natvig D.O."/>
            <person name="Alex L.A."/>
            <person name="Mannhaupt G."/>
            <person name="Ebbole D.J."/>
            <person name="Freitag M."/>
            <person name="Paulsen I."/>
            <person name="Sachs M.S."/>
            <person name="Lander E.S."/>
            <person name="Nusbaum C."/>
            <person name="Birren B.W."/>
        </authorList>
    </citation>
    <scope>NUCLEOTIDE SEQUENCE [LARGE SCALE GENOMIC DNA]</scope>
    <source>
        <strain>ATCC 24698 / 74-OR23-1A / CBS 708.71 / DSM 1257 / FGSC 987</strain>
    </source>
</reference>
<reference key="4">
    <citation type="journal article" date="1979" name="Eur. J. Biochem.">
        <title>Isolation of mitochondrial succinate: ubiquinone reductase, cytochrome c reductase and cytochrome c oxidase from Neurospora crassa using nonionic detergent.</title>
        <authorList>
            <person name="Weiss H."/>
            <person name="Kolb H.J."/>
        </authorList>
    </citation>
    <scope>SUBUNIT</scope>
    <scope>SUBCELLULAR LOCATION</scope>
</reference>
<reference key="5">
    <citation type="journal article" date="1981" name="J. Mol. Biol.">
        <title>Three-dimensional structure of ubiquinol:cytochrome c reductase from Neurospora mitochondria determined by electron microscopy of membrane crystals.</title>
        <authorList>
            <person name="Leonard K."/>
            <person name="Wingfield P."/>
            <person name="Arad T."/>
            <person name="Weiss H."/>
        </authorList>
    </citation>
    <scope>SUBUNIT</scope>
</reference>
<reference key="6">
    <citation type="journal article" date="1983" name="J. Bioenerg. Biomembr.">
        <title>Comparative study of the peptide composition of Complex III (quinol-cytochrome c reductase).</title>
        <authorList>
            <person name="Mendel-Hartvig I."/>
            <person name="Nelson B.D."/>
        </authorList>
    </citation>
    <scope>SUBUNIT</scope>
</reference>
<reference key="7">
    <citation type="journal article" date="1983" name="J. Mol. Biol.">
        <title>Structural studies of cytochrome reductase. Subunit topography determined by electron microscopy of membrane crystals of a subcomplex.</title>
        <authorList>
            <person name="Karlsson B."/>
            <person name="Hovmoeller S."/>
            <person name="Weiss H."/>
            <person name="Leonard K."/>
        </authorList>
    </citation>
    <scope>SUBUNIT</scope>
</reference>
<reference key="8">
    <citation type="journal article" date="1986" name="Eur. J. Biochem.">
        <title>Dimeric ubiquinol:cytochrome c reductase of Neurospora mitochondria contains one cooperative ubiquinone-reduction centre.</title>
        <authorList>
            <person name="Linke P."/>
            <person name="Bechmann G."/>
            <person name="Gothe A."/>
            <person name="Weiss H."/>
        </authorList>
    </citation>
    <scope>FUNCTION OF COMPLEX III</scope>
</reference>
<reference key="9">
    <citation type="journal article" date="1991" name="Eur. J. Biochem.">
        <title>Regulation of the proton/electron stoichiometry of mitochondrial ubiquinol:cytochrome c reductase by the membrane potential.</title>
        <authorList>
            <person name="Bechmann G."/>
            <person name="Weiss H."/>
        </authorList>
    </citation>
    <scope>FUNCTION OF COMPLEX III</scope>
</reference>
<reference key="10">
    <citation type="journal article" date="2007" name="Eukaryot. Cell">
        <title>Supramolecular organization of the respiratory chain in Neurospora crassa mitochondria.</title>
        <authorList>
            <person name="Marques I."/>
            <person name="Dencher N.A."/>
            <person name="Videira A."/>
            <person name="Krause F."/>
        </authorList>
    </citation>
    <scope>COMPOSITION OF THE RESPIRATORY COMPLEX III</scope>
    <scope>IDENTIFICATION BY MASS SPECTROMETRY</scope>
</reference>
<reference key="11">
    <citation type="journal article" date="2009" name="Mol. Microbiol.">
        <title>Effects of mitochondrial complex III disruption in the respiratory chain of Neurospora crassa.</title>
        <authorList>
            <person name="Duarte M."/>
            <person name="Videira A."/>
        </authorList>
    </citation>
    <scope>FUNCTION OF COMPLEX III</scope>
    <scope>SUBUNIT</scope>
</reference>
<sequence>MRPTQTMLGGGGGAPIGKHNHYLGGWGNFGGMKQRGIISYGISPNRQNPLAGTAHDAVFNTFRRVSSQFLYWAPSLVAGYYIMNWAIERNHYLNSKAGRAEFAGQEE</sequence>
<dbReference type="EMBL" id="U20790">
    <property type="protein sequence ID" value="AAC49654.1"/>
    <property type="molecule type" value="mRNA"/>
</dbReference>
<dbReference type="EMBL" id="BX294024">
    <property type="protein sequence ID" value="CAD71007.1"/>
    <property type="molecule type" value="Genomic_DNA"/>
</dbReference>
<dbReference type="EMBL" id="CM002240">
    <property type="protein sequence ID" value="EAA31578.1"/>
    <property type="molecule type" value="Genomic_DNA"/>
</dbReference>
<dbReference type="PIR" id="T46746">
    <property type="entry name" value="T46746"/>
</dbReference>
<dbReference type="RefSeq" id="XP_960814.1">
    <property type="nucleotide sequence ID" value="XM_955721.3"/>
</dbReference>
<dbReference type="SMR" id="P48503"/>
<dbReference type="FunCoup" id="P48503">
    <property type="interactions" value="84"/>
</dbReference>
<dbReference type="STRING" id="367110.P48503"/>
<dbReference type="PaxDb" id="5141-EFNCRP00000008104"/>
<dbReference type="EnsemblFungi" id="EAA31578">
    <property type="protein sequence ID" value="EAA31578"/>
    <property type="gene ID" value="NCU08947"/>
</dbReference>
<dbReference type="GeneID" id="3876952"/>
<dbReference type="KEGG" id="ncr:NCU08947"/>
<dbReference type="VEuPathDB" id="FungiDB:NCU08947"/>
<dbReference type="HOGENOM" id="CLU_156007_0_1_1"/>
<dbReference type="InParanoid" id="P48503"/>
<dbReference type="OMA" id="QWAIERN"/>
<dbReference type="OrthoDB" id="6683853at2759"/>
<dbReference type="Proteomes" id="UP000001805">
    <property type="component" value="Chromosome 2, Linkage Group V"/>
</dbReference>
<dbReference type="GO" id="GO:0005743">
    <property type="term" value="C:mitochondrial inner membrane"/>
    <property type="evidence" value="ECO:0007669"/>
    <property type="project" value="UniProtKB-SubCell"/>
</dbReference>
<dbReference type="GO" id="GO:0045275">
    <property type="term" value="C:respiratory chain complex III"/>
    <property type="evidence" value="ECO:0000318"/>
    <property type="project" value="GO_Central"/>
</dbReference>
<dbReference type="GO" id="GO:0006122">
    <property type="term" value="P:mitochondrial electron transport, ubiquinol to cytochrome c"/>
    <property type="evidence" value="ECO:0000318"/>
    <property type="project" value="GO_Central"/>
</dbReference>
<dbReference type="FunFam" id="1.20.5.210:FF:000001">
    <property type="entry name" value="Cytochrome b-c1 complex subunit 8"/>
    <property type="match status" value="1"/>
</dbReference>
<dbReference type="Gene3D" id="1.20.5.210">
    <property type="entry name" value="Cytochrome b-c1 complex subunit 8"/>
    <property type="match status" value="1"/>
</dbReference>
<dbReference type="InterPro" id="IPR004205">
    <property type="entry name" value="Cyt_bc1_su8"/>
</dbReference>
<dbReference type="InterPro" id="IPR036642">
    <property type="entry name" value="Cyt_bc1_su8_sf"/>
</dbReference>
<dbReference type="PANTHER" id="PTHR12119:SF2">
    <property type="entry name" value="CYTOCHROME B-C1 COMPLEX SUBUNIT 8"/>
    <property type="match status" value="1"/>
</dbReference>
<dbReference type="PANTHER" id="PTHR12119">
    <property type="entry name" value="UBIQUINOL-CYTOCHROME C REDUCTASE COMPLEX UBIQUINONE-BINDING PROTEIN QP-C"/>
    <property type="match status" value="1"/>
</dbReference>
<dbReference type="Pfam" id="PF02939">
    <property type="entry name" value="UcrQ"/>
    <property type="match status" value="1"/>
</dbReference>
<dbReference type="SUPFAM" id="SSF81508">
    <property type="entry name" value="Ubiquinone-binding protein QP-C of cytochrome bc1 complex (Ubiquinol-cytochrome c reductase)"/>
    <property type="match status" value="1"/>
</dbReference>
<protein>
    <recommendedName>
        <fullName>Cytochrome b-c1 complex subunit 8</fullName>
    </recommendedName>
    <alternativeName>
        <fullName>Complex III subunit 8</fullName>
    </alternativeName>
    <alternativeName>
        <fullName evidence="10">Complex III subunit VIII</fullName>
    </alternativeName>
    <alternativeName>
        <fullName>Ubiquinol-cytochrome c reductase complex 11 kDa protein</fullName>
    </alternativeName>
    <alternativeName>
        <fullName>Ubiquinol-cytochrome c reductase complex ubiquinone-binding protein QP-C</fullName>
    </alternativeName>
</protein>
<organism>
    <name type="scientific">Neurospora crassa (strain ATCC 24698 / 74-OR23-1A / CBS 708.71 / DSM 1257 / FGSC 987)</name>
    <dbReference type="NCBI Taxonomy" id="367110"/>
    <lineage>
        <taxon>Eukaryota</taxon>
        <taxon>Fungi</taxon>
        <taxon>Dikarya</taxon>
        <taxon>Ascomycota</taxon>
        <taxon>Pezizomycotina</taxon>
        <taxon>Sordariomycetes</taxon>
        <taxon>Sordariomycetidae</taxon>
        <taxon>Sordariales</taxon>
        <taxon>Sordariaceae</taxon>
        <taxon>Neurospora</taxon>
    </lineage>
</organism>
<evidence type="ECO:0000250" key="1">
    <source>
        <dbReference type="UniProtKB" id="P08525"/>
    </source>
</evidence>
<evidence type="ECO:0000269" key="2">
    <source>
    </source>
</evidence>
<evidence type="ECO:0000269" key="3">
    <source>
    </source>
</evidence>
<evidence type="ECO:0000269" key="4">
    <source>
    </source>
</evidence>
<evidence type="ECO:0000269" key="5">
    <source>
    </source>
</evidence>
<evidence type="ECO:0000269" key="6">
    <source>
    </source>
</evidence>
<evidence type="ECO:0000269" key="7">
    <source>
    </source>
</evidence>
<evidence type="ECO:0000269" key="8">
    <source>
    </source>
</evidence>
<evidence type="ECO:0000269" key="9">
    <source>
    </source>
</evidence>
<evidence type="ECO:0000303" key="10">
    <source>
    </source>
</evidence>
<evidence type="ECO:0000305" key="11"/>
<evidence type="ECO:0000305" key="12">
    <source>
    </source>
</evidence>
<evidence type="ECO:0000305" key="13">
    <source>
    </source>
</evidence>
<keyword id="KW-0903">Direct protein sequencing</keyword>
<keyword id="KW-0249">Electron transport</keyword>
<keyword id="KW-0472">Membrane</keyword>
<keyword id="KW-0496">Mitochondrion</keyword>
<keyword id="KW-0999">Mitochondrion inner membrane</keyword>
<keyword id="KW-1185">Reference proteome</keyword>
<keyword id="KW-0679">Respiratory chain</keyword>
<keyword id="KW-0812">Transmembrane</keyword>
<keyword id="KW-1133">Transmembrane helix</keyword>
<keyword id="KW-0813">Transport</keyword>